<feature type="chain" id="PRO_0000427243" description="Cell wall synthesis protein Wag31">
    <location>
        <begin position="1"/>
        <end position="260"/>
    </location>
</feature>
<feature type="region of interest" description="Disordered" evidence="3">
    <location>
        <begin position="233"/>
        <end position="260"/>
    </location>
</feature>
<feature type="coiled-coil region" evidence="2">
    <location>
        <begin position="31"/>
        <end position="64"/>
    </location>
</feature>
<feature type="coiled-coil region" evidence="2">
    <location>
        <begin position="161"/>
        <end position="196"/>
    </location>
</feature>
<feature type="modified residue" description="Phosphothreonine" evidence="1">
    <location>
        <position position="73"/>
    </location>
</feature>
<comment type="function">
    <text evidence="1">Important for maintaining cell shape and cell wall integrity by localizing peptidoglycan synthesis to the cell poles.</text>
</comment>
<comment type="subunit">
    <text evidence="1">Forms homooligomers.</text>
</comment>
<comment type="subcellular location">
    <subcellularLocation>
        <location evidence="1">Cytoplasm</location>
    </subcellularLocation>
    <text evidence="1">Localizes to the cell poles.</text>
</comment>
<comment type="PTM">
    <text evidence="1">Phosphorylated by PknA. Phosphorylation enhances polar localization, which in turn heightens polar peptidoglycan biosynthesis (By similarity).</text>
</comment>
<comment type="similarity">
    <text evidence="4">Belongs to the DivIVA family.</text>
</comment>
<proteinExistence type="inferred from homology"/>
<keyword id="KW-0131">Cell cycle</keyword>
<keyword id="KW-0132">Cell division</keyword>
<keyword id="KW-0133">Cell shape</keyword>
<keyword id="KW-0175">Coiled coil</keyword>
<keyword id="KW-0963">Cytoplasm</keyword>
<keyword id="KW-0597">Phosphoprotein</keyword>
<keyword id="KW-1185">Reference proteome</keyword>
<keyword id="KW-0346">Stress response</keyword>
<organism>
    <name type="scientific">Mycobacterium tuberculosis (strain CDC 1551 / Oshkosh)</name>
    <dbReference type="NCBI Taxonomy" id="83331"/>
    <lineage>
        <taxon>Bacteria</taxon>
        <taxon>Bacillati</taxon>
        <taxon>Actinomycetota</taxon>
        <taxon>Actinomycetes</taxon>
        <taxon>Mycobacteriales</taxon>
        <taxon>Mycobacteriaceae</taxon>
        <taxon>Mycobacterium</taxon>
        <taxon>Mycobacterium tuberculosis complex</taxon>
    </lineage>
</organism>
<evidence type="ECO:0000250" key="1"/>
<evidence type="ECO:0000255" key="2"/>
<evidence type="ECO:0000256" key="3">
    <source>
        <dbReference type="SAM" id="MobiDB-lite"/>
    </source>
</evidence>
<evidence type="ECO:0000305" key="4"/>
<protein>
    <recommendedName>
        <fullName>Cell wall synthesis protein Wag31</fullName>
    </recommendedName>
    <alternativeName>
        <fullName>Antigen 84</fullName>
    </alternativeName>
</protein>
<accession>P9WMU0</accession>
<accession>L0TBN0</accession>
<accession>P0A5N2</accession>
<accession>P46816</accession>
<reference key="1">
    <citation type="journal article" date="2002" name="J. Bacteriol.">
        <title>Whole-genome comparison of Mycobacterium tuberculosis clinical and laboratory strains.</title>
        <authorList>
            <person name="Fleischmann R.D."/>
            <person name="Alland D."/>
            <person name="Eisen J.A."/>
            <person name="Carpenter L."/>
            <person name="White O."/>
            <person name="Peterson J.D."/>
            <person name="DeBoy R.T."/>
            <person name="Dodson R.J."/>
            <person name="Gwinn M.L."/>
            <person name="Haft D.H."/>
            <person name="Hickey E.K."/>
            <person name="Kolonay J.F."/>
            <person name="Nelson W.C."/>
            <person name="Umayam L.A."/>
            <person name="Ermolaeva M.D."/>
            <person name="Salzberg S.L."/>
            <person name="Delcher A."/>
            <person name="Utterback T.R."/>
            <person name="Weidman J.F."/>
            <person name="Khouri H.M."/>
            <person name="Gill J."/>
            <person name="Mikula A."/>
            <person name="Bishai W."/>
            <person name="Jacobs W.R. Jr."/>
            <person name="Venter J.C."/>
            <person name="Fraser C.M."/>
        </authorList>
    </citation>
    <scope>NUCLEOTIDE SEQUENCE [LARGE SCALE GENOMIC DNA]</scope>
    <source>
        <strain>CDC 1551 / Oshkosh</strain>
    </source>
</reference>
<gene>
    <name type="primary">wag31</name>
    <name type="synonym">ag84</name>
    <name type="ordered locus">MT2204</name>
</gene>
<dbReference type="EMBL" id="AE000516">
    <property type="protein sequence ID" value="AAK46488.1"/>
    <property type="molecule type" value="Genomic_DNA"/>
</dbReference>
<dbReference type="PIR" id="E70578">
    <property type="entry name" value="E70578"/>
</dbReference>
<dbReference type="RefSeq" id="WP_003411131.1">
    <property type="nucleotide sequence ID" value="NZ_KK341227.1"/>
</dbReference>
<dbReference type="SMR" id="P9WMU0"/>
<dbReference type="KEGG" id="mtc:MT2204"/>
<dbReference type="PATRIC" id="fig|83331.31.peg.2377"/>
<dbReference type="HOGENOM" id="CLU_062236_0_0_11"/>
<dbReference type="Proteomes" id="UP000001020">
    <property type="component" value="Chromosome"/>
</dbReference>
<dbReference type="GO" id="GO:0005737">
    <property type="term" value="C:cytoplasm"/>
    <property type="evidence" value="ECO:0007669"/>
    <property type="project" value="UniProtKB-SubCell"/>
</dbReference>
<dbReference type="GO" id="GO:0051301">
    <property type="term" value="P:cell division"/>
    <property type="evidence" value="ECO:0007669"/>
    <property type="project" value="UniProtKB-KW"/>
</dbReference>
<dbReference type="GO" id="GO:0008360">
    <property type="term" value="P:regulation of cell shape"/>
    <property type="evidence" value="ECO:0007669"/>
    <property type="project" value="UniProtKB-KW"/>
</dbReference>
<dbReference type="Gene3D" id="6.10.250.660">
    <property type="match status" value="1"/>
</dbReference>
<dbReference type="Gene3D" id="1.20.5.620">
    <property type="entry name" value="F1F0 ATP synthase subunit B, membrane domain"/>
    <property type="match status" value="1"/>
</dbReference>
<dbReference type="InterPro" id="IPR019933">
    <property type="entry name" value="DivIVA_domain"/>
</dbReference>
<dbReference type="InterPro" id="IPR007793">
    <property type="entry name" value="DivIVA_fam"/>
</dbReference>
<dbReference type="NCBIfam" id="TIGR03544">
    <property type="entry name" value="DivI1A_domain"/>
    <property type="match status" value="1"/>
</dbReference>
<dbReference type="PANTHER" id="PTHR35794">
    <property type="entry name" value="CELL DIVISION PROTEIN DIVIVA"/>
    <property type="match status" value="1"/>
</dbReference>
<dbReference type="PANTHER" id="PTHR35794:SF2">
    <property type="entry name" value="CELL DIVISION PROTEIN DIVIVA"/>
    <property type="match status" value="1"/>
</dbReference>
<dbReference type="Pfam" id="PF05103">
    <property type="entry name" value="DivIVA"/>
    <property type="match status" value="1"/>
</dbReference>
<dbReference type="SUPFAM" id="SSF58113">
    <property type="entry name" value="Apolipoprotein A-I"/>
    <property type="match status" value="1"/>
</dbReference>
<sequence>MPLTPADVHNVAFSKPPIGKRGYNEDEVDAFLDLVENELTRLIEENSDLRQRINELDQELAAGGGAGVTPQATQAIPAYEPEPGKPAPAAVSAGMNEEQALKAARVLSLAQDTADRLTNTAKAESDKMLADARANAEQILGEARHTADATVAEARQRADAMLADAQSRSEAQLRQAQEKADALQADAERKHSEIMGTINQQRAVLEGRLEQLRTFEREYRTRLKTYLESQLEELGQRGSAAPVDSNADAGGFDQFNRGKN</sequence>
<name>WAG31_MYCTO</name>